<proteinExistence type="inferred from homology"/>
<dbReference type="EMBL" id="AJ879453">
    <property type="protein sequence ID" value="CAI53836.1"/>
    <property type="molecule type" value="Genomic_DNA"/>
</dbReference>
<dbReference type="EMBL" id="AJ879453">
    <property type="protein sequence ID" value="CAI53857.1"/>
    <property type="molecule type" value="Genomic_DNA"/>
</dbReference>
<dbReference type="SMR" id="Q3V4X1"/>
<dbReference type="GO" id="GO:0009507">
    <property type="term" value="C:chloroplast"/>
    <property type="evidence" value="ECO:0007669"/>
    <property type="project" value="UniProtKB-SubCell"/>
</dbReference>
<dbReference type="GO" id="GO:0005762">
    <property type="term" value="C:mitochondrial large ribosomal subunit"/>
    <property type="evidence" value="ECO:0007669"/>
    <property type="project" value="TreeGrafter"/>
</dbReference>
<dbReference type="GO" id="GO:0019843">
    <property type="term" value="F:rRNA binding"/>
    <property type="evidence" value="ECO:0007669"/>
    <property type="project" value="UniProtKB-UniRule"/>
</dbReference>
<dbReference type="GO" id="GO:0003735">
    <property type="term" value="F:structural constituent of ribosome"/>
    <property type="evidence" value="ECO:0007669"/>
    <property type="project" value="InterPro"/>
</dbReference>
<dbReference type="GO" id="GO:0016740">
    <property type="term" value="F:transferase activity"/>
    <property type="evidence" value="ECO:0007669"/>
    <property type="project" value="InterPro"/>
</dbReference>
<dbReference type="GO" id="GO:0032543">
    <property type="term" value="P:mitochondrial translation"/>
    <property type="evidence" value="ECO:0007669"/>
    <property type="project" value="TreeGrafter"/>
</dbReference>
<dbReference type="FunFam" id="4.10.950.10:FF:000001">
    <property type="entry name" value="50S ribosomal protein L2"/>
    <property type="match status" value="1"/>
</dbReference>
<dbReference type="FunFam" id="2.30.30.30:FF:000008">
    <property type="entry name" value="50S ribosomal protein L2, chloroplastic"/>
    <property type="match status" value="1"/>
</dbReference>
<dbReference type="FunFam" id="2.40.50.140:FF:000029">
    <property type="entry name" value="50S ribosomal protein L2, chloroplastic"/>
    <property type="match status" value="1"/>
</dbReference>
<dbReference type="Gene3D" id="2.30.30.30">
    <property type="match status" value="1"/>
</dbReference>
<dbReference type="Gene3D" id="2.40.50.140">
    <property type="entry name" value="Nucleic acid-binding proteins"/>
    <property type="match status" value="1"/>
</dbReference>
<dbReference type="Gene3D" id="4.10.950.10">
    <property type="entry name" value="Ribosomal protein L2, domain 3"/>
    <property type="match status" value="1"/>
</dbReference>
<dbReference type="HAMAP" id="MF_01320_B">
    <property type="entry name" value="Ribosomal_uL2_B"/>
    <property type="match status" value="1"/>
</dbReference>
<dbReference type="InterPro" id="IPR012340">
    <property type="entry name" value="NA-bd_OB-fold"/>
</dbReference>
<dbReference type="InterPro" id="IPR014722">
    <property type="entry name" value="Rib_uL2_dom2"/>
</dbReference>
<dbReference type="InterPro" id="IPR002171">
    <property type="entry name" value="Ribosomal_uL2"/>
</dbReference>
<dbReference type="InterPro" id="IPR005880">
    <property type="entry name" value="Ribosomal_uL2_bac/org-type"/>
</dbReference>
<dbReference type="InterPro" id="IPR022669">
    <property type="entry name" value="Ribosomal_uL2_C"/>
</dbReference>
<dbReference type="InterPro" id="IPR022671">
    <property type="entry name" value="Ribosomal_uL2_CS"/>
</dbReference>
<dbReference type="InterPro" id="IPR014726">
    <property type="entry name" value="Ribosomal_uL2_dom3"/>
</dbReference>
<dbReference type="InterPro" id="IPR022666">
    <property type="entry name" value="Ribosomal_uL2_RNA-bd_dom"/>
</dbReference>
<dbReference type="InterPro" id="IPR008991">
    <property type="entry name" value="Translation_prot_SH3-like_sf"/>
</dbReference>
<dbReference type="NCBIfam" id="TIGR01171">
    <property type="entry name" value="rplB_bact"/>
    <property type="match status" value="1"/>
</dbReference>
<dbReference type="PANTHER" id="PTHR13691:SF5">
    <property type="entry name" value="LARGE RIBOSOMAL SUBUNIT PROTEIN UL2M"/>
    <property type="match status" value="1"/>
</dbReference>
<dbReference type="PANTHER" id="PTHR13691">
    <property type="entry name" value="RIBOSOMAL PROTEIN L2"/>
    <property type="match status" value="1"/>
</dbReference>
<dbReference type="Pfam" id="PF00181">
    <property type="entry name" value="Ribosomal_L2"/>
    <property type="match status" value="1"/>
</dbReference>
<dbReference type="Pfam" id="PF03947">
    <property type="entry name" value="Ribosomal_L2_C"/>
    <property type="match status" value="1"/>
</dbReference>
<dbReference type="PIRSF" id="PIRSF002158">
    <property type="entry name" value="Ribosomal_L2"/>
    <property type="match status" value="1"/>
</dbReference>
<dbReference type="SMART" id="SM01383">
    <property type="entry name" value="Ribosomal_L2"/>
    <property type="match status" value="1"/>
</dbReference>
<dbReference type="SMART" id="SM01382">
    <property type="entry name" value="Ribosomal_L2_C"/>
    <property type="match status" value="1"/>
</dbReference>
<dbReference type="SUPFAM" id="SSF50249">
    <property type="entry name" value="Nucleic acid-binding proteins"/>
    <property type="match status" value="1"/>
</dbReference>
<dbReference type="SUPFAM" id="SSF50104">
    <property type="entry name" value="Translation proteins SH3-like domain"/>
    <property type="match status" value="1"/>
</dbReference>
<dbReference type="PROSITE" id="PS00467">
    <property type="entry name" value="RIBOSOMAL_L2"/>
    <property type="match status" value="1"/>
</dbReference>
<evidence type="ECO:0000250" key="1"/>
<evidence type="ECO:0000255" key="2">
    <source>
        <dbReference type="HAMAP-Rule" id="MF_01320"/>
    </source>
</evidence>
<evidence type="ECO:0000256" key="3">
    <source>
        <dbReference type="SAM" id="MobiDB-lite"/>
    </source>
</evidence>
<evidence type="ECO:0000305" key="4"/>
<organism>
    <name type="scientific">Acorus calamus</name>
    <name type="common">Sweet flag</name>
    <dbReference type="NCBI Taxonomy" id="4465"/>
    <lineage>
        <taxon>Eukaryota</taxon>
        <taxon>Viridiplantae</taxon>
        <taxon>Streptophyta</taxon>
        <taxon>Embryophyta</taxon>
        <taxon>Tracheophyta</taxon>
        <taxon>Spermatophyta</taxon>
        <taxon>Magnoliopsida</taxon>
        <taxon>Liliopsida</taxon>
        <taxon>Acoraceae</taxon>
        <taxon>Acorus</taxon>
    </lineage>
</organism>
<gene>
    <name type="primary">rpl2-A</name>
</gene>
<gene>
    <name type="primary">rpl2-B</name>
</gene>
<name>RK2_ACOCL</name>
<comment type="subunit">
    <text evidence="1">Part of the 50S ribosomal subunit.</text>
</comment>
<comment type="subcellular location">
    <subcellularLocation>
        <location>Plastid</location>
        <location>Chloroplast</location>
    </subcellularLocation>
</comment>
<comment type="similarity">
    <text evidence="4">Belongs to the universal ribosomal protein uL2 family.</text>
</comment>
<sequence length="273" mass="29689">MAIHLYKTSTSSTRNGAVDSQVKSNPRNNLIYGQHHCGKGRNARGIITAGHRGGGHKRLYRKIDFRRNKKDISGRIVTIEYDPNRNAYICLIHYGDGEKRYILHPRGAIIGDTIVSGTEVPISMGNALPLTDMPLGTAIHNIEITLGKGGQLARAAGAVAKLIAKEGKSATLRLPSGEVRLISKNCSATVGQVGNVGANQQSLGRAGSKCWLGKRPVVRGVVMNPVDHPHGGGEGRAPIGRKKPTTPWGYPALGRRSRKRNKYSDRFILRRRK</sequence>
<keyword id="KW-0150">Chloroplast</keyword>
<keyword id="KW-0934">Plastid</keyword>
<keyword id="KW-0687">Ribonucleoprotein</keyword>
<keyword id="KW-0689">Ribosomal protein</keyword>
<reference key="1">
    <citation type="journal article" date="2005" name="Mol. Biol. Evol.">
        <title>Analysis of Acorus calamus chloroplast genome and its phylogenetic implications.</title>
        <authorList>
            <person name="Goremykin V.V."/>
            <person name="Holland B."/>
            <person name="Hirsch-Ernst K.I."/>
            <person name="Hellwig F.H."/>
        </authorList>
    </citation>
    <scope>NUCLEOTIDE SEQUENCE [LARGE SCALE GENOMIC DNA]</scope>
</reference>
<geneLocation type="chloroplast"/>
<accession>Q3V4X1</accession>
<feature type="chain" id="PRO_0000237272" description="Large ribosomal subunit protein uL2cz/uL2cy">
    <location>
        <begin position="1"/>
        <end position="273"/>
    </location>
</feature>
<feature type="region of interest" description="Disordered" evidence="3">
    <location>
        <begin position="1"/>
        <end position="23"/>
    </location>
</feature>
<feature type="region of interest" description="Disordered" evidence="3">
    <location>
        <begin position="224"/>
        <end position="273"/>
    </location>
</feature>
<feature type="compositionally biased region" description="Basic and acidic residues" evidence="3">
    <location>
        <begin position="262"/>
        <end position="273"/>
    </location>
</feature>
<protein>
    <recommendedName>
        <fullName evidence="2">Large ribosomal subunit protein uL2cz/uL2cy</fullName>
    </recommendedName>
    <alternativeName>
        <fullName evidence="4">50S ribosomal protein L2, chloroplastic</fullName>
    </alternativeName>
</protein>